<feature type="signal peptide" evidence="2">
    <location>
        <begin position="1"/>
        <end position="15"/>
    </location>
</feature>
<feature type="chain" id="PRO_5000140667" description="Odontogenic ameloblast-associated protein">
    <location>
        <begin position="16"/>
        <end position="278"/>
    </location>
</feature>
<feature type="region of interest" description="Disordered" evidence="3">
    <location>
        <begin position="103"/>
        <end position="124"/>
    </location>
</feature>
<feature type="region of interest" description="Interaction with ARHGEF5" evidence="1">
    <location>
        <begin position="126"/>
        <end position="128"/>
    </location>
</feature>
<feature type="region of interest" description="Disordered" evidence="3">
    <location>
        <begin position="230"/>
        <end position="278"/>
    </location>
</feature>
<feature type="compositionally biased region" description="Low complexity" evidence="3">
    <location>
        <begin position="107"/>
        <end position="124"/>
    </location>
</feature>
<feature type="compositionally biased region" description="Polar residues" evidence="3">
    <location>
        <begin position="236"/>
        <end position="258"/>
    </location>
</feature>
<feature type="glycosylation site" description="O-linked (GalNAc...) threonine" evidence="2">
    <location>
        <position position="116"/>
    </location>
</feature>
<feature type="glycosylation site" description="O-linked (GalNAc...) threonine" evidence="2">
    <location>
        <position position="120"/>
    </location>
</feature>
<feature type="glycosylation site" description="O-linked (GalNAc...) threonine" evidence="2">
    <location>
        <position position="240"/>
    </location>
</feature>
<feature type="glycosylation site" description="O-linked (GalNAc...) threonine" evidence="2">
    <location>
        <position position="243"/>
    </location>
</feature>
<feature type="glycosylation site" description="O-linked (GalNAc...) threonine" evidence="2">
    <location>
        <position position="249"/>
    </location>
</feature>
<feature type="glycosylation site" description="O-linked (GalNAc...) threonine" evidence="2">
    <location>
        <position position="254"/>
    </location>
</feature>
<reference key="1">
    <citation type="journal article" date="2006" name="Eur. J. Oral Sci.">
        <title>Identification of secreted and membrane proteins in the rat incisor enamel organ using a signal-trap screening approach.</title>
        <authorList>
            <person name="Moffatt P."/>
            <person name="Smith C.E."/>
            <person name="Sooknanan R."/>
            <person name="St-Arnaud R."/>
            <person name="Nanci A."/>
        </authorList>
    </citation>
    <scope>NUCLEOTIDE SEQUENCE [MRNA]</scope>
    <scope>TISSUE SPECIFICITY</scope>
</reference>
<reference key="2">
    <citation type="journal article" date="2007" name="Eur. J. Oral Sci.">
        <title>The amyloid protein APin is highly expressed during enamel mineralization and maturation in rat incisors.</title>
        <authorList>
            <person name="Park J.-C."/>
            <person name="Park J.-T."/>
            <person name="Son H.-H."/>
            <person name="Kim H.-J."/>
            <person name="Jeong M.-J."/>
            <person name="Lee C.-S."/>
            <person name="Dey R."/>
            <person name="Cho M.-I."/>
        </authorList>
    </citation>
    <scope>SUBCELLULAR LOCATION</scope>
    <scope>TISSUE SPECIFICITY</scope>
    <scope>DEVELOPMENTAL STAGE</scope>
</reference>
<reference key="3">
    <citation type="journal article" date="2008" name="J. Cell. Biochem.">
        <title>Characterization of Apin, a secreted protein highly expressed in tooth-associated epithelia.</title>
        <authorList>
            <person name="Moffatt P."/>
            <person name="Smith C.E."/>
            <person name="St Arnaud R."/>
            <person name="Nanci A."/>
        </authorList>
    </citation>
    <scope>TISSUE SPECIFICITY</scope>
    <scope>GLYCOSYLATION</scope>
</reference>
<reference key="4">
    <citation type="journal article" date="2015" name="J. Biol. Chem.">
        <title>Odontogenic ameloblast-associated protein (ODAM) Mediates Junctional Epithelium Attachment to Tooth via Integrin-ODAM-Rho guanine nucleotide exchange factor 5 (ARHGEF5)-Ras homolog gene family member A (RhoA) Signaling.</title>
        <authorList>
            <person name="Lee H.K."/>
            <person name="Ji S."/>
            <person name="Park S.J."/>
            <person name="Choung H.W."/>
            <person name="Choi Y."/>
            <person name="Lee H.J."/>
            <person name="Park S.Y."/>
            <person name="Park J.C."/>
        </authorList>
    </citation>
    <scope>DEVELOPMENTAL STAGE</scope>
</reference>
<dbReference type="EMBL" id="DQ198380">
    <property type="protein sequence ID" value="ABA54404.1"/>
    <property type="molecule type" value="mRNA"/>
</dbReference>
<dbReference type="RefSeq" id="NP_001037739.1">
    <property type="nucleotide sequence ID" value="NM_001044274.1"/>
</dbReference>
<dbReference type="FunCoup" id="Q3HS83">
    <property type="interactions" value="4"/>
</dbReference>
<dbReference type="STRING" id="10116.ENSRNOP00000035991"/>
<dbReference type="GlyCosmos" id="Q3HS83">
    <property type="glycosylation" value="6 sites, No reported glycans"/>
</dbReference>
<dbReference type="GlyGen" id="Q3HS83">
    <property type="glycosylation" value="6 sites"/>
</dbReference>
<dbReference type="PhosphoSitePlus" id="Q3HS83"/>
<dbReference type="PaxDb" id="10116-ENSRNOP00000035991"/>
<dbReference type="GeneID" id="641555"/>
<dbReference type="KEGG" id="rno:641555"/>
<dbReference type="UCSC" id="RGD:1561883">
    <property type="organism name" value="rat"/>
</dbReference>
<dbReference type="AGR" id="RGD:1561883"/>
<dbReference type="CTD" id="54959"/>
<dbReference type="RGD" id="1561883">
    <property type="gene designation" value="Odam"/>
</dbReference>
<dbReference type="eggNOG" id="ENOG502RM1P">
    <property type="taxonomic scope" value="Eukaryota"/>
</dbReference>
<dbReference type="InParanoid" id="Q3HS83"/>
<dbReference type="OrthoDB" id="87542at9989"/>
<dbReference type="PhylomeDB" id="Q3HS83"/>
<dbReference type="PRO" id="PR:Q3HS83"/>
<dbReference type="Proteomes" id="UP000002494">
    <property type="component" value="Unplaced"/>
</dbReference>
<dbReference type="GO" id="GO:0071944">
    <property type="term" value="C:cell periphery"/>
    <property type="evidence" value="ECO:0000266"/>
    <property type="project" value="RGD"/>
</dbReference>
<dbReference type="GO" id="GO:0005737">
    <property type="term" value="C:cytoplasm"/>
    <property type="evidence" value="ECO:0000266"/>
    <property type="project" value="RGD"/>
</dbReference>
<dbReference type="GO" id="GO:0005576">
    <property type="term" value="C:extracellular region"/>
    <property type="evidence" value="ECO:0000266"/>
    <property type="project" value="RGD"/>
</dbReference>
<dbReference type="GO" id="GO:0005615">
    <property type="term" value="C:extracellular space"/>
    <property type="evidence" value="ECO:0000266"/>
    <property type="project" value="RGD"/>
</dbReference>
<dbReference type="GO" id="GO:0005634">
    <property type="term" value="C:nucleus"/>
    <property type="evidence" value="ECO:0000266"/>
    <property type="project" value="RGD"/>
</dbReference>
<dbReference type="GO" id="GO:0099512">
    <property type="term" value="C:supramolecular fiber"/>
    <property type="evidence" value="ECO:0000266"/>
    <property type="project" value="RGD"/>
</dbReference>
<dbReference type="GO" id="GO:0031214">
    <property type="term" value="P:biomineral tissue development"/>
    <property type="evidence" value="ECO:0007669"/>
    <property type="project" value="UniProtKB-KW"/>
</dbReference>
<dbReference type="GO" id="GO:0006954">
    <property type="term" value="P:inflammatory response"/>
    <property type="evidence" value="ECO:0000266"/>
    <property type="project" value="RGD"/>
</dbReference>
<dbReference type="GO" id="GO:0042476">
    <property type="term" value="P:odontogenesis"/>
    <property type="evidence" value="ECO:0000270"/>
    <property type="project" value="UniProtKB"/>
</dbReference>
<dbReference type="GO" id="GO:0042475">
    <property type="term" value="P:odontogenesis of dentin-containing tooth"/>
    <property type="evidence" value="ECO:0000266"/>
    <property type="project" value="RGD"/>
</dbReference>
<dbReference type="GO" id="GO:0060054">
    <property type="term" value="P:positive regulation of epithelial cell proliferation involved in wound healing"/>
    <property type="evidence" value="ECO:0000266"/>
    <property type="project" value="RGD"/>
</dbReference>
<dbReference type="GO" id="GO:0010628">
    <property type="term" value="P:positive regulation of gene expression"/>
    <property type="evidence" value="ECO:0000266"/>
    <property type="project" value="RGD"/>
</dbReference>
<dbReference type="GO" id="GO:0032956">
    <property type="term" value="P:regulation of actin cytoskeleton organization"/>
    <property type="evidence" value="ECO:0000266"/>
    <property type="project" value="RGD"/>
</dbReference>
<dbReference type="GO" id="GO:0009611">
    <property type="term" value="P:response to wounding"/>
    <property type="evidence" value="ECO:0000266"/>
    <property type="project" value="RGD"/>
</dbReference>
<dbReference type="InterPro" id="IPR026802">
    <property type="entry name" value="Odam"/>
</dbReference>
<dbReference type="PANTHER" id="PTHR16237">
    <property type="entry name" value="ODONTOGENIC AMELOBLAST-ASSOCIATED PROTEIN"/>
    <property type="match status" value="1"/>
</dbReference>
<dbReference type="PANTHER" id="PTHR16237:SF3">
    <property type="entry name" value="ODONTOGENIC AMELOBLAST-ASSOCIATED PROTEIN"/>
    <property type="match status" value="1"/>
</dbReference>
<dbReference type="Pfam" id="PF15424">
    <property type="entry name" value="ODAM"/>
    <property type="match status" value="1"/>
</dbReference>
<protein>
    <recommendedName>
        <fullName>Odontogenic ameloblast-associated protein</fullName>
    </recommendedName>
    <alternativeName>
        <fullName>Apin</fullName>
    </alternativeName>
</protein>
<organism>
    <name type="scientific">Rattus norvegicus</name>
    <name type="common">Rat</name>
    <dbReference type="NCBI Taxonomy" id="10116"/>
    <lineage>
        <taxon>Eukaryota</taxon>
        <taxon>Metazoa</taxon>
        <taxon>Chordata</taxon>
        <taxon>Craniata</taxon>
        <taxon>Vertebrata</taxon>
        <taxon>Euteleostomi</taxon>
        <taxon>Mammalia</taxon>
        <taxon>Eutheria</taxon>
        <taxon>Euarchontoglires</taxon>
        <taxon>Glires</taxon>
        <taxon>Rodentia</taxon>
        <taxon>Myomorpha</taxon>
        <taxon>Muroidea</taxon>
        <taxon>Muridae</taxon>
        <taxon>Murinae</taxon>
        <taxon>Rattus</taxon>
    </lineage>
</organism>
<name>ODAM_RAT</name>
<gene>
    <name type="primary">Odam</name>
    <name type="synonym">Apin</name>
    <name type="ORF">EO-009</name>
</gene>
<keyword id="KW-0091">Biomineralization</keyword>
<keyword id="KW-0963">Cytoplasm</keyword>
<keyword id="KW-0325">Glycoprotein</keyword>
<keyword id="KW-0539">Nucleus</keyword>
<keyword id="KW-1185">Reference proteome</keyword>
<keyword id="KW-0964">Secreted</keyword>
<keyword id="KW-0732">Signal</keyword>
<comment type="function">
    <text evidence="1">Tooth-associated epithelia protein that probably plays a role in odontogenesis, the complex process that results in the initiation and generation of the tooth. May be incorporated in the enamel matrix at the end of mineralization process. Involved in the induction of RHOA activity via interaction with ARHGEF and expression of downstream factors such as ROCK. Plays a role in attachment of the junctional epithelium to the tooth surface.</text>
</comment>
<comment type="subunit">
    <text evidence="1">Interacts (via C-terminus) with ARHGEF5.</text>
</comment>
<comment type="subcellular location">
    <subcellularLocation>
        <location evidence="5">Secreted</location>
    </subcellularLocation>
    <subcellularLocation>
        <location evidence="1">Cytoplasm</location>
    </subcellularLocation>
    <subcellularLocation>
        <location evidence="1">Nucleus</location>
    </subcellularLocation>
</comment>
<comment type="tissue specificity">
    <text evidence="4 5 6">Highly expressed in tooth-associated epithelia. In tooth, it is only detected in the ameloblast layer of the enamel organ, starting at post-secretory transition and extending throughout the maturation stage. Also detected in epithelial cells of the gingiva which bind it to the tooth surface (junctional epithelium) (at protein level). Predominantly expressed in mandible, but also expressed at weak level in nasal and salivary glands, and at much lower level in epididymis.</text>
</comment>
<comment type="developmental stage">
    <text evidence="5 7">Specifically expressed in ameloblasts during maturation stages. Not expressed in pre-ameloblasts, weakly expressed in secretory ameloblasts, and strongly expressed in maturation-stage ameloblasts as well as in the junctional epithelium attached to the enamel of erupted molars.</text>
</comment>
<comment type="PTM">
    <text evidence="8">O-glycosylated.</text>
</comment>
<comment type="similarity">
    <text evidence="8">Belongs to the ODAM family.</text>
</comment>
<accession>Q3HS83</accession>
<proteinExistence type="evidence at protein level"/>
<sequence>MKIIILLGLIGATSSAPLITQRLLSASNSHELLLNLNNGQLLPLQFQSAFNSWIPPFPGLLQQQQQQAQVSGHPQFPLSTLESFAGLFPNQIPFSRQVGFAQGGQAGQPDFSQQQTPSQTQQASPMSYVVPVKVPQDQTQMFQYYPVYMLLPWEQPQQTVTSSPQQTGQQLYEEQIPFYNQFGFVPQQAEPGVPGGQQHLVLDSFVGTAPETPGMPAVEGPLYPQKEPIGFKQDNVGVSTPSTSPKPDTGNFFTSEINPTIAPLLPEQKVNADSLREP</sequence>
<evidence type="ECO:0000250" key="1">
    <source>
        <dbReference type="UniProtKB" id="A1E959"/>
    </source>
</evidence>
<evidence type="ECO:0000255" key="2"/>
<evidence type="ECO:0000256" key="3">
    <source>
        <dbReference type="SAM" id="MobiDB-lite"/>
    </source>
</evidence>
<evidence type="ECO:0000269" key="4">
    <source>
    </source>
</evidence>
<evidence type="ECO:0000269" key="5">
    <source>
    </source>
</evidence>
<evidence type="ECO:0000269" key="6">
    <source>
    </source>
</evidence>
<evidence type="ECO:0000269" key="7">
    <source>
    </source>
</evidence>
<evidence type="ECO:0000305" key="8"/>